<feature type="chain" id="PRO_1000064272" description="D-cysteine desulfhydrase">
    <location>
        <begin position="1"/>
        <end position="330"/>
    </location>
</feature>
<feature type="modified residue" description="N6-(pyridoxal phosphate)lysine" evidence="1">
    <location>
        <position position="52"/>
    </location>
</feature>
<protein>
    <recommendedName>
        <fullName evidence="1">D-cysteine desulfhydrase</fullName>
        <ecNumber evidence="1">4.4.1.15</ecNumber>
    </recommendedName>
</protein>
<evidence type="ECO:0000255" key="1">
    <source>
        <dbReference type="HAMAP-Rule" id="MF_01045"/>
    </source>
</evidence>
<sequence>MTLQQKLTQFPRLDLVGNATPLEKLSRLSDYLGREIYIKRDDVTPVALGGNKLRKLEFLAADALRQGADTLVTAGAIQSNHVRQTAAVAAKLGLHCVALLENPIGTEQANYLTNGNRLLLDLFNVDVVMCEALNDPNQQLAELATRVEAQGFRPYVVPIGGSNALGALGYVQCSLEIAAQAAGNVAFSSVVVASGSAGTHAGLAVGLQQLLPDAELIGVTVSRSADEQRPKVAQIQQALATSLGMTDPLAKITLWDSYFAPQYGMPNEEGIAAIKLLARLEGILLDPVYTGKAMAGLLDGIEQQKFCDKGPILFIHTGGAPALFAYHPQV</sequence>
<comment type="function">
    <text evidence="1">Catalyzes the alpha,beta-elimination reaction of D-cysteine and of several D-cysteine derivatives. It could be a defense mechanism against D-cysteine.</text>
</comment>
<comment type="catalytic activity">
    <reaction evidence="1">
        <text>D-cysteine + H2O = hydrogen sulfide + pyruvate + NH4(+) + H(+)</text>
        <dbReference type="Rhea" id="RHEA:11268"/>
        <dbReference type="ChEBI" id="CHEBI:15361"/>
        <dbReference type="ChEBI" id="CHEBI:15377"/>
        <dbReference type="ChEBI" id="CHEBI:15378"/>
        <dbReference type="ChEBI" id="CHEBI:28938"/>
        <dbReference type="ChEBI" id="CHEBI:29919"/>
        <dbReference type="ChEBI" id="CHEBI:35236"/>
        <dbReference type="EC" id="4.4.1.15"/>
    </reaction>
</comment>
<comment type="cofactor">
    <cofactor evidence="1">
        <name>pyridoxal 5'-phosphate</name>
        <dbReference type="ChEBI" id="CHEBI:597326"/>
    </cofactor>
</comment>
<comment type="subunit">
    <text evidence="1">Homodimer.</text>
</comment>
<comment type="similarity">
    <text evidence="1">Belongs to the ACC deaminase/D-cysteine desulfhydrase family.</text>
</comment>
<reference key="1">
    <citation type="submission" date="2007-02" db="EMBL/GenBank/DDBJ databases">
        <title>Complete sequence of chromosome of Yersinia pestis Pestoides F.</title>
        <authorList>
            <consortium name="US DOE Joint Genome Institute"/>
            <person name="Copeland A."/>
            <person name="Lucas S."/>
            <person name="Lapidus A."/>
            <person name="Barry K."/>
            <person name="Detter J.C."/>
            <person name="Glavina del Rio T."/>
            <person name="Hammon N."/>
            <person name="Israni S."/>
            <person name="Dalin E."/>
            <person name="Tice H."/>
            <person name="Pitluck S."/>
            <person name="Di Bartolo G."/>
            <person name="Chain P."/>
            <person name="Malfatti S."/>
            <person name="Shin M."/>
            <person name="Vergez L."/>
            <person name="Schmutz J."/>
            <person name="Larimer F."/>
            <person name="Land M."/>
            <person name="Hauser L."/>
            <person name="Worsham P."/>
            <person name="Chu M."/>
            <person name="Bearden S."/>
            <person name="Garcia E."/>
            <person name="Richardson P."/>
        </authorList>
    </citation>
    <scope>NUCLEOTIDE SEQUENCE [LARGE SCALE GENOMIC DNA]</scope>
    <source>
        <strain>Pestoides F</strain>
    </source>
</reference>
<name>DCYD_YERPP</name>
<dbReference type="EC" id="4.4.1.15" evidence="1"/>
<dbReference type="EMBL" id="CP000668">
    <property type="protein sequence ID" value="ABP39672.1"/>
    <property type="molecule type" value="Genomic_DNA"/>
</dbReference>
<dbReference type="RefSeq" id="WP_002227959.1">
    <property type="nucleotide sequence ID" value="NZ_CP009715.1"/>
</dbReference>
<dbReference type="SMR" id="A4TK60"/>
<dbReference type="KEGG" id="ypp:YPDSF_1281"/>
<dbReference type="PATRIC" id="fig|386656.14.peg.2523"/>
<dbReference type="GO" id="GO:0019148">
    <property type="term" value="F:D-cysteine desulfhydrase activity"/>
    <property type="evidence" value="ECO:0007669"/>
    <property type="project" value="UniProtKB-UniRule"/>
</dbReference>
<dbReference type="GO" id="GO:0046416">
    <property type="term" value="P:D-amino acid metabolic process"/>
    <property type="evidence" value="ECO:0007669"/>
    <property type="project" value="UniProtKB-UniRule"/>
</dbReference>
<dbReference type="CDD" id="cd06449">
    <property type="entry name" value="ACCD"/>
    <property type="match status" value="1"/>
</dbReference>
<dbReference type="FunFam" id="3.40.50.1100:FF:000017">
    <property type="entry name" value="D-cysteine desulfhydrase"/>
    <property type="match status" value="1"/>
</dbReference>
<dbReference type="Gene3D" id="3.40.50.1100">
    <property type="match status" value="2"/>
</dbReference>
<dbReference type="HAMAP" id="MF_01045">
    <property type="entry name" value="D_Cys_desulfhydr"/>
    <property type="match status" value="1"/>
</dbReference>
<dbReference type="InterPro" id="IPR027278">
    <property type="entry name" value="ACCD_DCysDesulf"/>
</dbReference>
<dbReference type="InterPro" id="IPR005966">
    <property type="entry name" value="D-Cys_desShydrase"/>
</dbReference>
<dbReference type="InterPro" id="IPR023702">
    <property type="entry name" value="D_Cys_desulphydr_bac"/>
</dbReference>
<dbReference type="InterPro" id="IPR001926">
    <property type="entry name" value="TrpB-like_PALP"/>
</dbReference>
<dbReference type="InterPro" id="IPR036052">
    <property type="entry name" value="TrpB-like_PALP_sf"/>
</dbReference>
<dbReference type="NCBIfam" id="TIGR01275">
    <property type="entry name" value="ACC_deam_rel"/>
    <property type="match status" value="1"/>
</dbReference>
<dbReference type="NCBIfam" id="NF003030">
    <property type="entry name" value="PRK03910.1-3"/>
    <property type="match status" value="1"/>
</dbReference>
<dbReference type="NCBIfam" id="NF003032">
    <property type="entry name" value="PRK03910.1-5"/>
    <property type="match status" value="1"/>
</dbReference>
<dbReference type="PANTHER" id="PTHR43780">
    <property type="entry name" value="1-AMINOCYCLOPROPANE-1-CARBOXYLATE DEAMINASE-RELATED"/>
    <property type="match status" value="1"/>
</dbReference>
<dbReference type="PANTHER" id="PTHR43780:SF2">
    <property type="entry name" value="1-AMINOCYCLOPROPANE-1-CARBOXYLATE DEAMINASE-RELATED"/>
    <property type="match status" value="1"/>
</dbReference>
<dbReference type="Pfam" id="PF00291">
    <property type="entry name" value="PALP"/>
    <property type="match status" value="1"/>
</dbReference>
<dbReference type="PIRSF" id="PIRSF006278">
    <property type="entry name" value="ACCD_DCysDesulf"/>
    <property type="match status" value="1"/>
</dbReference>
<dbReference type="SUPFAM" id="SSF53686">
    <property type="entry name" value="Tryptophan synthase beta subunit-like PLP-dependent enzymes"/>
    <property type="match status" value="1"/>
</dbReference>
<organism>
    <name type="scientific">Yersinia pestis (strain Pestoides F)</name>
    <dbReference type="NCBI Taxonomy" id="386656"/>
    <lineage>
        <taxon>Bacteria</taxon>
        <taxon>Pseudomonadati</taxon>
        <taxon>Pseudomonadota</taxon>
        <taxon>Gammaproteobacteria</taxon>
        <taxon>Enterobacterales</taxon>
        <taxon>Yersiniaceae</taxon>
        <taxon>Yersinia</taxon>
    </lineage>
</organism>
<gene>
    <name evidence="1" type="primary">dcyD</name>
    <name type="ordered locus">YPDSF_1281</name>
</gene>
<accession>A4TK60</accession>
<proteinExistence type="inferred from homology"/>
<keyword id="KW-0456">Lyase</keyword>
<keyword id="KW-0663">Pyridoxal phosphate</keyword>